<comment type="function">
    <text evidence="1">NDH-1 shuttles electrons from NADH, via FMN and iron-sulfur (Fe-S) centers, to quinones in the respiratory chain. The immediate electron acceptor for the enzyme in this species is believed to be ubiquinone. Couples the redox reaction to proton translocation (for every two electrons transferred, four hydrogen ions are translocated across the cytoplasmic membrane), and thus conserves the redox energy in a proton gradient.</text>
</comment>
<comment type="catalytic activity">
    <reaction evidence="1">
        <text>a quinone + NADH + 5 H(+)(in) = a quinol + NAD(+) + 4 H(+)(out)</text>
        <dbReference type="Rhea" id="RHEA:57888"/>
        <dbReference type="ChEBI" id="CHEBI:15378"/>
        <dbReference type="ChEBI" id="CHEBI:24646"/>
        <dbReference type="ChEBI" id="CHEBI:57540"/>
        <dbReference type="ChEBI" id="CHEBI:57945"/>
        <dbReference type="ChEBI" id="CHEBI:132124"/>
    </reaction>
</comment>
<comment type="subunit">
    <text evidence="1">NDH-1 is composed of 14 different subunits. Subunits NuoB, C, D, E, F, and G constitute the peripheral sector of the complex.</text>
</comment>
<comment type="subcellular location">
    <subcellularLocation>
        <location evidence="1">Cell inner membrane</location>
        <topology evidence="1">Peripheral membrane protein</topology>
        <orientation evidence="1">Cytoplasmic side</orientation>
    </subcellularLocation>
</comment>
<comment type="similarity">
    <text evidence="1">Belongs to the complex I 49 kDa subunit family.</text>
</comment>
<gene>
    <name evidence="1" type="primary">nuoD</name>
    <name type="ordered locus">Mpop_1016</name>
</gene>
<name>NUOD_METPB</name>
<feature type="chain" id="PRO_0000357849" description="NADH-quinone oxidoreductase subunit D">
    <location>
        <begin position="1"/>
        <end position="396"/>
    </location>
</feature>
<proteinExistence type="inferred from homology"/>
<organism>
    <name type="scientific">Methylorubrum populi (strain ATCC BAA-705 / NCIMB 13946 / BJ001)</name>
    <name type="common">Methylobacterium populi</name>
    <dbReference type="NCBI Taxonomy" id="441620"/>
    <lineage>
        <taxon>Bacteria</taxon>
        <taxon>Pseudomonadati</taxon>
        <taxon>Pseudomonadota</taxon>
        <taxon>Alphaproteobacteria</taxon>
        <taxon>Hyphomicrobiales</taxon>
        <taxon>Methylobacteriaceae</taxon>
        <taxon>Methylorubrum</taxon>
    </lineage>
</organism>
<accession>B1ZA43</accession>
<evidence type="ECO:0000255" key="1">
    <source>
        <dbReference type="HAMAP-Rule" id="MF_01358"/>
    </source>
</evidence>
<dbReference type="EC" id="7.1.1.-" evidence="1"/>
<dbReference type="EMBL" id="CP001029">
    <property type="protein sequence ID" value="ACB79192.1"/>
    <property type="molecule type" value="Genomic_DNA"/>
</dbReference>
<dbReference type="RefSeq" id="WP_012452943.1">
    <property type="nucleotide sequence ID" value="NC_010725.1"/>
</dbReference>
<dbReference type="SMR" id="B1ZA43"/>
<dbReference type="STRING" id="441620.Mpop_1016"/>
<dbReference type="KEGG" id="mpo:Mpop_1016"/>
<dbReference type="eggNOG" id="COG0649">
    <property type="taxonomic scope" value="Bacteria"/>
</dbReference>
<dbReference type="HOGENOM" id="CLU_015134_1_1_5"/>
<dbReference type="OrthoDB" id="9801496at2"/>
<dbReference type="Proteomes" id="UP000007136">
    <property type="component" value="Chromosome"/>
</dbReference>
<dbReference type="GO" id="GO:0005886">
    <property type="term" value="C:plasma membrane"/>
    <property type="evidence" value="ECO:0007669"/>
    <property type="project" value="UniProtKB-SubCell"/>
</dbReference>
<dbReference type="GO" id="GO:0051287">
    <property type="term" value="F:NAD binding"/>
    <property type="evidence" value="ECO:0007669"/>
    <property type="project" value="InterPro"/>
</dbReference>
<dbReference type="GO" id="GO:0050136">
    <property type="term" value="F:NADH:ubiquinone reductase (non-electrogenic) activity"/>
    <property type="evidence" value="ECO:0007669"/>
    <property type="project" value="UniProtKB-UniRule"/>
</dbReference>
<dbReference type="GO" id="GO:0048038">
    <property type="term" value="F:quinone binding"/>
    <property type="evidence" value="ECO:0007669"/>
    <property type="project" value="UniProtKB-KW"/>
</dbReference>
<dbReference type="FunFam" id="1.10.645.10:FF:000005">
    <property type="entry name" value="NADH-quinone oxidoreductase subunit D"/>
    <property type="match status" value="1"/>
</dbReference>
<dbReference type="Gene3D" id="1.10.645.10">
    <property type="entry name" value="Cytochrome-c3 Hydrogenase, chain B"/>
    <property type="match status" value="1"/>
</dbReference>
<dbReference type="HAMAP" id="MF_01358">
    <property type="entry name" value="NDH1_NuoD"/>
    <property type="match status" value="1"/>
</dbReference>
<dbReference type="InterPro" id="IPR001135">
    <property type="entry name" value="NADH_Q_OxRdtase_suD"/>
</dbReference>
<dbReference type="InterPro" id="IPR014029">
    <property type="entry name" value="NADH_UbQ_OxRdtase_49kDa_CS"/>
</dbReference>
<dbReference type="InterPro" id="IPR022885">
    <property type="entry name" value="NDH1_su_D/H"/>
</dbReference>
<dbReference type="InterPro" id="IPR029014">
    <property type="entry name" value="NiFe-Hase_large"/>
</dbReference>
<dbReference type="NCBIfam" id="TIGR01962">
    <property type="entry name" value="NuoD"/>
    <property type="match status" value="1"/>
</dbReference>
<dbReference type="NCBIfam" id="NF004739">
    <property type="entry name" value="PRK06075.1"/>
    <property type="match status" value="1"/>
</dbReference>
<dbReference type="PANTHER" id="PTHR11993:SF10">
    <property type="entry name" value="NADH DEHYDROGENASE [UBIQUINONE] IRON-SULFUR PROTEIN 2, MITOCHONDRIAL"/>
    <property type="match status" value="1"/>
</dbReference>
<dbReference type="PANTHER" id="PTHR11993">
    <property type="entry name" value="NADH-UBIQUINONE OXIDOREDUCTASE 49 KDA SUBUNIT"/>
    <property type="match status" value="1"/>
</dbReference>
<dbReference type="Pfam" id="PF00346">
    <property type="entry name" value="Complex1_49kDa"/>
    <property type="match status" value="1"/>
</dbReference>
<dbReference type="SUPFAM" id="SSF56762">
    <property type="entry name" value="HydB/Nqo4-like"/>
    <property type="match status" value="1"/>
</dbReference>
<dbReference type="PROSITE" id="PS00535">
    <property type="entry name" value="COMPLEX1_49K"/>
    <property type="match status" value="1"/>
</dbReference>
<keyword id="KW-0997">Cell inner membrane</keyword>
<keyword id="KW-1003">Cell membrane</keyword>
<keyword id="KW-0472">Membrane</keyword>
<keyword id="KW-0520">NAD</keyword>
<keyword id="KW-0874">Quinone</keyword>
<keyword id="KW-1278">Translocase</keyword>
<keyword id="KW-0813">Transport</keyword>
<keyword id="KW-0830">Ubiquinone</keyword>
<protein>
    <recommendedName>
        <fullName evidence="1">NADH-quinone oxidoreductase subunit D</fullName>
        <ecNumber evidence="1">7.1.1.-</ecNumber>
    </recommendedName>
    <alternativeName>
        <fullName evidence="1">NADH dehydrogenase I subunit D</fullName>
    </alternativeName>
    <alternativeName>
        <fullName evidence="1">NDH-1 subunit D</fullName>
    </alternativeName>
</protein>
<reference key="1">
    <citation type="submission" date="2008-04" db="EMBL/GenBank/DDBJ databases">
        <title>Complete sequence of chromosome of Methylobacterium populi BJ001.</title>
        <authorList>
            <consortium name="US DOE Joint Genome Institute"/>
            <person name="Copeland A."/>
            <person name="Lucas S."/>
            <person name="Lapidus A."/>
            <person name="Glavina del Rio T."/>
            <person name="Dalin E."/>
            <person name="Tice H."/>
            <person name="Bruce D."/>
            <person name="Goodwin L."/>
            <person name="Pitluck S."/>
            <person name="Chertkov O."/>
            <person name="Brettin T."/>
            <person name="Detter J.C."/>
            <person name="Han C."/>
            <person name="Kuske C.R."/>
            <person name="Schmutz J."/>
            <person name="Larimer F."/>
            <person name="Land M."/>
            <person name="Hauser L."/>
            <person name="Kyrpides N."/>
            <person name="Mikhailova N."/>
            <person name="Marx C."/>
            <person name="Richardson P."/>
        </authorList>
    </citation>
    <scope>NUCLEOTIDE SEQUENCE [LARGE SCALE GENOMIC DNA]</scope>
    <source>
        <strain>ATCC BAA-705 / NCIMB 13946 / BJ001</strain>
    </source>
</reference>
<sequence length="396" mass="44910">MSEHNIRNFSINFGPQHPAAHGVLRLVLELDGEVVERVDPHIGLLHRGTEKLIEHKTYLQATPYFDRLDYVSPMNQEHAFCLAIERLAGIEVPRRAQLIRTLFCEIGRLLSHLLNVTTQAMDVGALTPPLWGFEEREKLMIFYERASGARLHANYFRPGGVHQDLPPALIDDIEAFCDPFLKVVDDLDNLVMANRIFKQRNVDIGIVSVDEAMAWGFSGVMVRGSGIPWDLRKSQPYECYEEMDFDIPVGKNGDTYDRQVIRMEEMRESVKIMRQCCAKLREPSGQGPIASIDGKFAPPPRREMKRSMEALIHHFKLYTEGFHVPEGEVYAAVEAPKGEFGVYLVSDGTNKPYRCKIRAPGFAHLQAMDWMCRGHLLADVSCVLGTLDIVFGEVDR</sequence>